<name>SODM_STRGR</name>
<protein>
    <recommendedName>
        <fullName>Superoxide dismutase [Fe-Zn]</fullName>
        <ecNumber>1.15.1.1</ecNumber>
    </recommendedName>
</protein>
<proteinExistence type="evidence at protein level"/>
<dbReference type="EC" id="1.15.1.1"/>
<dbReference type="GO" id="GO:0046872">
    <property type="term" value="F:metal ion binding"/>
    <property type="evidence" value="ECO:0007669"/>
    <property type="project" value="UniProtKB-KW"/>
</dbReference>
<dbReference type="GO" id="GO:0004784">
    <property type="term" value="F:superoxide dismutase activity"/>
    <property type="evidence" value="ECO:0007669"/>
    <property type="project" value="UniProtKB-EC"/>
</dbReference>
<reference key="1">
    <citation type="journal article" date="1996" name="Arch. Biochem. Biophys.">
        <title>Unique isozymes of superoxide dismutase in Streptomyces griseus.</title>
        <authorList>
            <person name="Youn H.-D."/>
            <person name="Youn H."/>
            <person name="Lee J.-W."/>
            <person name="Yim Y.-I."/>
            <person name="Lee J.K."/>
            <person name="Hah Y.C."/>
            <person name="Kang S.-O."/>
        </authorList>
    </citation>
    <scope>PROTEIN SEQUENCE</scope>
    <source>
        <strain>KCTC 9006</strain>
    </source>
</reference>
<accession>P80733</accession>
<feature type="chain" id="PRO_0000160091" description="Superoxide dismutase [Fe-Zn]">
    <location>
        <begin position="1"/>
        <end position="15" status="greater than"/>
    </location>
</feature>
<feature type="non-terminal residue">
    <location>
        <position position="15"/>
    </location>
</feature>
<sequence>ATYTLPEPPYDYAAL</sequence>
<keyword id="KW-0903">Direct protein sequencing</keyword>
<keyword id="KW-0408">Iron</keyword>
<keyword id="KW-0479">Metal-binding</keyword>
<keyword id="KW-0560">Oxidoreductase</keyword>
<keyword id="KW-0862">Zinc</keyword>
<evidence type="ECO:0000250" key="1"/>
<evidence type="ECO:0000305" key="2"/>
<gene>
    <name type="primary">sod2</name>
</gene>
<organism>
    <name type="scientific">Streptomyces griseus</name>
    <dbReference type="NCBI Taxonomy" id="1911"/>
    <lineage>
        <taxon>Bacteria</taxon>
        <taxon>Bacillati</taxon>
        <taxon>Actinomycetota</taxon>
        <taxon>Actinomycetes</taxon>
        <taxon>Kitasatosporales</taxon>
        <taxon>Streptomycetaceae</taxon>
        <taxon>Streptomyces</taxon>
    </lineage>
</organism>
<comment type="function">
    <text>Destroys superoxide anion radicals which are normally produced within the cells and which are toxic to biological systems.</text>
</comment>
<comment type="catalytic activity">
    <reaction>
        <text>2 superoxide + 2 H(+) = H2O2 + O2</text>
        <dbReference type="Rhea" id="RHEA:20696"/>
        <dbReference type="ChEBI" id="CHEBI:15378"/>
        <dbReference type="ChEBI" id="CHEBI:15379"/>
        <dbReference type="ChEBI" id="CHEBI:16240"/>
        <dbReference type="ChEBI" id="CHEBI:18421"/>
        <dbReference type="EC" id="1.15.1.1"/>
    </reaction>
</comment>
<comment type="cofactor">
    <cofactor evidence="1">
        <name>Fe(2+)</name>
        <dbReference type="ChEBI" id="CHEBI:29033"/>
    </cofactor>
    <cofactor evidence="1">
        <name>Zn(2+)</name>
        <dbReference type="ChEBI" id="CHEBI:29105"/>
    </cofactor>
    <text evidence="1">Binds 1 Fe(2+) or Zn(2+) ion per subunit.</text>
</comment>
<comment type="subunit">
    <text>Tetramer.</text>
</comment>
<comment type="similarity">
    <text evidence="2">Belongs to the iron/manganese superoxide dismutase family.</text>
</comment>